<dbReference type="EMBL" id="CP000681">
    <property type="protein sequence ID" value="ABP74195.1"/>
    <property type="molecule type" value="Genomic_DNA"/>
</dbReference>
<dbReference type="SMR" id="A4Y2L2"/>
<dbReference type="STRING" id="319224.Sputcn32_0463"/>
<dbReference type="KEGG" id="spc:Sputcn32_0463"/>
<dbReference type="eggNOG" id="COG0227">
    <property type="taxonomic scope" value="Bacteria"/>
</dbReference>
<dbReference type="HOGENOM" id="CLU_064548_3_1_6"/>
<dbReference type="GO" id="GO:0022625">
    <property type="term" value="C:cytosolic large ribosomal subunit"/>
    <property type="evidence" value="ECO:0007669"/>
    <property type="project" value="TreeGrafter"/>
</dbReference>
<dbReference type="GO" id="GO:0003735">
    <property type="term" value="F:structural constituent of ribosome"/>
    <property type="evidence" value="ECO:0007669"/>
    <property type="project" value="InterPro"/>
</dbReference>
<dbReference type="GO" id="GO:0006412">
    <property type="term" value="P:translation"/>
    <property type="evidence" value="ECO:0007669"/>
    <property type="project" value="UniProtKB-UniRule"/>
</dbReference>
<dbReference type="FunFam" id="2.30.170.40:FF:000001">
    <property type="entry name" value="50S ribosomal protein L28"/>
    <property type="match status" value="1"/>
</dbReference>
<dbReference type="Gene3D" id="2.30.170.40">
    <property type="entry name" value="Ribosomal protein L28/L24"/>
    <property type="match status" value="1"/>
</dbReference>
<dbReference type="HAMAP" id="MF_00373">
    <property type="entry name" value="Ribosomal_bL28"/>
    <property type="match status" value="1"/>
</dbReference>
<dbReference type="InterPro" id="IPR026569">
    <property type="entry name" value="Ribosomal_bL28"/>
</dbReference>
<dbReference type="InterPro" id="IPR034704">
    <property type="entry name" value="Ribosomal_bL28/bL31-like_sf"/>
</dbReference>
<dbReference type="InterPro" id="IPR001383">
    <property type="entry name" value="Ribosomal_bL28_bact-type"/>
</dbReference>
<dbReference type="InterPro" id="IPR037147">
    <property type="entry name" value="Ribosomal_bL28_sf"/>
</dbReference>
<dbReference type="NCBIfam" id="TIGR00009">
    <property type="entry name" value="L28"/>
    <property type="match status" value="1"/>
</dbReference>
<dbReference type="PANTHER" id="PTHR13528">
    <property type="entry name" value="39S RIBOSOMAL PROTEIN L28, MITOCHONDRIAL"/>
    <property type="match status" value="1"/>
</dbReference>
<dbReference type="PANTHER" id="PTHR13528:SF2">
    <property type="entry name" value="LARGE RIBOSOMAL SUBUNIT PROTEIN BL28M"/>
    <property type="match status" value="1"/>
</dbReference>
<dbReference type="Pfam" id="PF00830">
    <property type="entry name" value="Ribosomal_L28"/>
    <property type="match status" value="1"/>
</dbReference>
<dbReference type="SUPFAM" id="SSF143800">
    <property type="entry name" value="L28p-like"/>
    <property type="match status" value="1"/>
</dbReference>
<name>RL28_SHEPC</name>
<comment type="similarity">
    <text evidence="1">Belongs to the bacterial ribosomal protein bL28 family.</text>
</comment>
<accession>A4Y2L2</accession>
<reference key="1">
    <citation type="submission" date="2007-04" db="EMBL/GenBank/DDBJ databases">
        <title>Complete sequence of Shewanella putrefaciens CN-32.</title>
        <authorList>
            <consortium name="US DOE Joint Genome Institute"/>
            <person name="Copeland A."/>
            <person name="Lucas S."/>
            <person name="Lapidus A."/>
            <person name="Barry K."/>
            <person name="Detter J.C."/>
            <person name="Glavina del Rio T."/>
            <person name="Hammon N."/>
            <person name="Israni S."/>
            <person name="Dalin E."/>
            <person name="Tice H."/>
            <person name="Pitluck S."/>
            <person name="Chain P."/>
            <person name="Malfatti S."/>
            <person name="Shin M."/>
            <person name="Vergez L."/>
            <person name="Schmutz J."/>
            <person name="Larimer F."/>
            <person name="Land M."/>
            <person name="Hauser L."/>
            <person name="Kyrpides N."/>
            <person name="Mikhailova N."/>
            <person name="Romine M.F."/>
            <person name="Fredrickson J."/>
            <person name="Tiedje J."/>
            <person name="Richardson P."/>
        </authorList>
    </citation>
    <scope>NUCLEOTIDE SEQUENCE [LARGE SCALE GENOMIC DNA]</scope>
    <source>
        <strain>CN-32 / ATCC BAA-453</strain>
    </source>
</reference>
<evidence type="ECO:0000255" key="1">
    <source>
        <dbReference type="HAMAP-Rule" id="MF_00373"/>
    </source>
</evidence>
<evidence type="ECO:0000256" key="2">
    <source>
        <dbReference type="SAM" id="MobiDB-lite"/>
    </source>
</evidence>
<evidence type="ECO:0000305" key="3"/>
<keyword id="KW-0687">Ribonucleoprotein</keyword>
<keyword id="KW-0689">Ribosomal protein</keyword>
<protein>
    <recommendedName>
        <fullName evidence="1">Large ribosomal subunit protein bL28</fullName>
    </recommendedName>
    <alternativeName>
        <fullName evidence="3">50S ribosomal protein L28</fullName>
    </alternativeName>
</protein>
<gene>
    <name evidence="1" type="primary">rpmB</name>
    <name type="ordered locus">Sputcn32_0463</name>
</gene>
<proteinExistence type="inferred from homology"/>
<feature type="chain" id="PRO_1000007350" description="Large ribosomal subunit protein bL28">
    <location>
        <begin position="1"/>
        <end position="78"/>
    </location>
</feature>
<feature type="region of interest" description="Disordered" evidence="2">
    <location>
        <begin position="1"/>
        <end position="21"/>
    </location>
</feature>
<organism>
    <name type="scientific">Shewanella putrefaciens (strain CN-32 / ATCC BAA-453)</name>
    <dbReference type="NCBI Taxonomy" id="319224"/>
    <lineage>
        <taxon>Bacteria</taxon>
        <taxon>Pseudomonadati</taxon>
        <taxon>Pseudomonadota</taxon>
        <taxon>Gammaproteobacteria</taxon>
        <taxon>Alteromonadales</taxon>
        <taxon>Shewanellaceae</taxon>
        <taxon>Shewanella</taxon>
    </lineage>
</organism>
<sequence>MSRVCQVTGKKPMVGNNRSHAKNATRRRFLPNLQNHRFWLEEEKRFVQLRVSTKGIRLIDKKGIEVVVAELRARGEKV</sequence>